<sequence length="199" mass="21288">MAEAPGDIERLIELMARLPGLGPRSARRAVLLMLKKRGAVMAPLAQAMAEVATSARDCVRCGNITNADLCGICRDERRATGELCVVEDVADLWALERAGAFRGRYHVLGGVLSALDSVGPEELRIPRLAERVREEGISEVILALNATVDGQTTAHYIADVLEPSGVQVTSLAQGVPIGGELDYLDDGTIGAALRARRRF</sequence>
<comment type="function">
    <text evidence="1">May play a role in DNA repair. It seems to be involved in an RecBC-independent recombinational process of DNA repair. It may act with RecF and RecO.</text>
</comment>
<comment type="similarity">
    <text evidence="1">Belongs to the RecR family.</text>
</comment>
<gene>
    <name evidence="1" type="primary">recR</name>
    <name type="ordered locus">Rsph17029_2367</name>
</gene>
<accession>A3PMA3</accession>
<keyword id="KW-0227">DNA damage</keyword>
<keyword id="KW-0233">DNA recombination</keyword>
<keyword id="KW-0234">DNA repair</keyword>
<keyword id="KW-0479">Metal-binding</keyword>
<keyword id="KW-0862">Zinc</keyword>
<keyword id="KW-0863">Zinc-finger</keyword>
<reference key="1">
    <citation type="submission" date="2007-02" db="EMBL/GenBank/DDBJ databases">
        <title>Complete sequence of chromosome 1 of Rhodobacter sphaeroides ATCC 17029.</title>
        <authorList>
            <person name="Copeland A."/>
            <person name="Lucas S."/>
            <person name="Lapidus A."/>
            <person name="Barry K."/>
            <person name="Detter J.C."/>
            <person name="Glavina del Rio T."/>
            <person name="Hammon N."/>
            <person name="Israni S."/>
            <person name="Dalin E."/>
            <person name="Tice H."/>
            <person name="Pitluck S."/>
            <person name="Kiss H."/>
            <person name="Brettin T."/>
            <person name="Bruce D."/>
            <person name="Han C."/>
            <person name="Tapia R."/>
            <person name="Gilna P."/>
            <person name="Schmutz J."/>
            <person name="Larimer F."/>
            <person name="Land M."/>
            <person name="Hauser L."/>
            <person name="Kyrpides N."/>
            <person name="Mikhailova N."/>
            <person name="Richardson P."/>
            <person name="Mackenzie C."/>
            <person name="Choudhary M."/>
            <person name="Donohue T.J."/>
            <person name="Kaplan S."/>
        </authorList>
    </citation>
    <scope>NUCLEOTIDE SEQUENCE [LARGE SCALE GENOMIC DNA]</scope>
    <source>
        <strain>ATCC 17029 / ATH 2.4.9</strain>
    </source>
</reference>
<proteinExistence type="inferred from homology"/>
<protein>
    <recommendedName>
        <fullName evidence="1">Recombination protein RecR</fullName>
    </recommendedName>
</protein>
<name>RECR_CERS1</name>
<evidence type="ECO:0000255" key="1">
    <source>
        <dbReference type="HAMAP-Rule" id="MF_00017"/>
    </source>
</evidence>
<feature type="chain" id="PRO_1000001595" description="Recombination protein RecR">
    <location>
        <begin position="1"/>
        <end position="199"/>
    </location>
</feature>
<feature type="domain" description="Toprim" evidence="1">
    <location>
        <begin position="81"/>
        <end position="176"/>
    </location>
</feature>
<feature type="zinc finger region" description="C4-type" evidence="1">
    <location>
        <begin position="58"/>
        <end position="73"/>
    </location>
</feature>
<organism>
    <name type="scientific">Cereibacter sphaeroides (strain ATCC 17029 / ATH 2.4.9)</name>
    <name type="common">Rhodobacter sphaeroides</name>
    <dbReference type="NCBI Taxonomy" id="349101"/>
    <lineage>
        <taxon>Bacteria</taxon>
        <taxon>Pseudomonadati</taxon>
        <taxon>Pseudomonadota</taxon>
        <taxon>Alphaproteobacteria</taxon>
        <taxon>Rhodobacterales</taxon>
        <taxon>Paracoccaceae</taxon>
        <taxon>Cereibacter</taxon>
    </lineage>
</organism>
<dbReference type="EMBL" id="CP000577">
    <property type="protein sequence ID" value="ABN77469.1"/>
    <property type="molecule type" value="Genomic_DNA"/>
</dbReference>
<dbReference type="RefSeq" id="WP_002720894.1">
    <property type="nucleotide sequence ID" value="NC_009049.1"/>
</dbReference>
<dbReference type="SMR" id="A3PMA3"/>
<dbReference type="GeneID" id="67447462"/>
<dbReference type="KEGG" id="rsh:Rsph17029_2367"/>
<dbReference type="HOGENOM" id="CLU_060739_1_1_5"/>
<dbReference type="GO" id="GO:0003677">
    <property type="term" value="F:DNA binding"/>
    <property type="evidence" value="ECO:0007669"/>
    <property type="project" value="UniProtKB-UniRule"/>
</dbReference>
<dbReference type="GO" id="GO:0008270">
    <property type="term" value="F:zinc ion binding"/>
    <property type="evidence" value="ECO:0007669"/>
    <property type="project" value="UniProtKB-KW"/>
</dbReference>
<dbReference type="GO" id="GO:0006310">
    <property type="term" value="P:DNA recombination"/>
    <property type="evidence" value="ECO:0007669"/>
    <property type="project" value="UniProtKB-UniRule"/>
</dbReference>
<dbReference type="GO" id="GO:0006281">
    <property type="term" value="P:DNA repair"/>
    <property type="evidence" value="ECO:0007669"/>
    <property type="project" value="UniProtKB-UniRule"/>
</dbReference>
<dbReference type="CDD" id="cd01025">
    <property type="entry name" value="TOPRIM_recR"/>
    <property type="match status" value="1"/>
</dbReference>
<dbReference type="Gene3D" id="3.40.1360.10">
    <property type="match status" value="1"/>
</dbReference>
<dbReference type="Gene3D" id="1.10.8.420">
    <property type="entry name" value="RecR Domain 1"/>
    <property type="match status" value="1"/>
</dbReference>
<dbReference type="HAMAP" id="MF_00017">
    <property type="entry name" value="RecR"/>
    <property type="match status" value="1"/>
</dbReference>
<dbReference type="InterPro" id="IPR000093">
    <property type="entry name" value="DNA_Rcmb_RecR"/>
</dbReference>
<dbReference type="InterPro" id="IPR023627">
    <property type="entry name" value="Rcmb_RecR"/>
</dbReference>
<dbReference type="InterPro" id="IPR015967">
    <property type="entry name" value="Rcmb_RecR_Znf"/>
</dbReference>
<dbReference type="InterPro" id="IPR006171">
    <property type="entry name" value="TOPRIM_dom"/>
</dbReference>
<dbReference type="InterPro" id="IPR034137">
    <property type="entry name" value="TOPRIM_RecR"/>
</dbReference>
<dbReference type="NCBIfam" id="TIGR00615">
    <property type="entry name" value="recR"/>
    <property type="match status" value="1"/>
</dbReference>
<dbReference type="PANTHER" id="PTHR30446">
    <property type="entry name" value="RECOMBINATION PROTEIN RECR"/>
    <property type="match status" value="1"/>
</dbReference>
<dbReference type="PANTHER" id="PTHR30446:SF0">
    <property type="entry name" value="RECOMBINATION PROTEIN RECR"/>
    <property type="match status" value="1"/>
</dbReference>
<dbReference type="Pfam" id="PF21175">
    <property type="entry name" value="RecR_C"/>
    <property type="match status" value="1"/>
</dbReference>
<dbReference type="Pfam" id="PF21176">
    <property type="entry name" value="RecR_HhH"/>
    <property type="match status" value="1"/>
</dbReference>
<dbReference type="Pfam" id="PF02132">
    <property type="entry name" value="RecR_ZnF"/>
    <property type="match status" value="1"/>
</dbReference>
<dbReference type="Pfam" id="PF13662">
    <property type="entry name" value="Toprim_4"/>
    <property type="match status" value="1"/>
</dbReference>
<dbReference type="SMART" id="SM00493">
    <property type="entry name" value="TOPRIM"/>
    <property type="match status" value="1"/>
</dbReference>
<dbReference type="SUPFAM" id="SSF111304">
    <property type="entry name" value="Recombination protein RecR"/>
    <property type="match status" value="1"/>
</dbReference>
<dbReference type="PROSITE" id="PS50880">
    <property type="entry name" value="TOPRIM"/>
    <property type="match status" value="1"/>
</dbReference>